<proteinExistence type="inferred from homology"/>
<accession>Q9P900</accession>
<accession>B8NHY6</accession>
<sequence length="386" mass="43161">MTGLDMETIFAKIKDEYARTDDVGKRQIQGHIRELQVGFYSDWDVVMRLSSGPLQVALAKVAIDLGIFRSLKESDTPITLAEFVKKTGASPRLLGRILRTQAAFGLIKETGPQEYTSSAFTDVFANSDAAGAVVQLFDISGPCTQILPDFLAERNYQDITSNKDCVFQKAFGSDLTMFEWMPQHPKHMESLGHLMALERPVSWVDHFPILEELGKFPAPDKVLMVDIGGGFGQQSKALRAKFPNLPGRLIVQDIPQTLANAQPAAGIEFMEHNFFEPQPIQNAKFYYLRHVFHDWPDEQCVLILKQIIPAMGPESQILIDEMVIPSTGVPWQAAFTDLLMMNSLGGVERTRAEWDDLMEQAGLEIIQSKVYDSKEQAILVAVAKRT</sequence>
<reference key="1">
    <citation type="journal article" date="2000" name="Gene">
        <title>Cloning and characterization of avfA and omtB genes involved in aflatoxin biosynthesis in three Aspergillus species.</title>
        <authorList>
            <person name="Yu J."/>
            <person name="Woloshuk C.P."/>
            <person name="Bhatnagar D."/>
            <person name="Cleveland T.E."/>
        </authorList>
    </citation>
    <scope>NUCLEOTIDE SEQUENCE [GENOMIC DNA]</scope>
    <scope>FUNCTION</scope>
    <scope>PATHWAY</scope>
    <source>
        <strain>ATCC 200026 / FGSC A1120 / IAM 13836 / NRRL 3357 / JCM 12722 / SRRC 167</strain>
    </source>
</reference>
<reference key="2">
    <citation type="journal article" date="2015" name="Genome Announc.">
        <title>Genome sequence of Aspergillus flavus NRRL 3357, a strain that causes aflatoxin contamination of food and feed.</title>
        <authorList>
            <person name="Nierman W.C."/>
            <person name="Yu J."/>
            <person name="Fedorova-Abrams N.D."/>
            <person name="Losada L."/>
            <person name="Cleveland T.E."/>
            <person name="Bhatnagar D."/>
            <person name="Bennett J.W."/>
            <person name="Dean R."/>
            <person name="Payne G.A."/>
        </authorList>
    </citation>
    <scope>NUCLEOTIDE SEQUENCE [LARGE SCALE GENOMIC DNA]</scope>
    <source>
        <strain>ATCC 200026 / FGSC A1120 / IAM 13836 / NRRL 3357 / JCM 12722 / SRRC 167</strain>
    </source>
</reference>
<evidence type="ECO:0000250" key="1"/>
<evidence type="ECO:0000250" key="2">
    <source>
        <dbReference type="UniProtKB" id="O04385"/>
    </source>
</evidence>
<evidence type="ECO:0000250" key="3">
    <source>
        <dbReference type="UniProtKB" id="Q9UQY0"/>
    </source>
</evidence>
<evidence type="ECO:0000255" key="4">
    <source>
        <dbReference type="PROSITE-ProRule" id="PRU01020"/>
    </source>
</evidence>
<evidence type="ECO:0000269" key="5">
    <source>
    </source>
</evidence>
<keyword id="KW-0489">Methyltransferase</keyword>
<keyword id="KW-0949">S-adenosyl-L-methionine</keyword>
<keyword id="KW-0808">Transferase</keyword>
<gene>
    <name type="primary">omtB</name>
    <name type="synonym">AflO</name>
    <name type="synonym">dmtA</name>
    <name type="ORF">AFLA_139220</name>
</gene>
<protein>
    <recommendedName>
        <fullName>Demethylsterigmatocystin 6-O-methyltransferase</fullName>
        <ecNumber>2.1.1.109</ecNumber>
    </recommendedName>
    <alternativeName>
        <fullName>Methyltransferase B</fullName>
    </alternativeName>
</protein>
<name>OMTB_ASPFN</name>
<dbReference type="EC" id="2.1.1.109"/>
<dbReference type="EMBL" id="AF159789">
    <property type="protein sequence ID" value="AAF26223.1"/>
    <property type="molecule type" value="Genomic_DNA"/>
</dbReference>
<dbReference type="EMBL" id="EQ963478">
    <property type="protein sequence ID" value="EED51157.1"/>
    <property type="molecule type" value="Genomic_DNA"/>
</dbReference>
<dbReference type="RefSeq" id="XP_002379933.1">
    <property type="nucleotide sequence ID" value="XM_002379892.1"/>
</dbReference>
<dbReference type="SMR" id="Q9P900"/>
<dbReference type="STRING" id="332952.Q9P900"/>
<dbReference type="EnsemblFungi" id="EED51157">
    <property type="protein sequence ID" value="EED51157"/>
    <property type="gene ID" value="AFLA_139220"/>
</dbReference>
<dbReference type="VEuPathDB" id="FungiDB:AFLA_006292"/>
<dbReference type="eggNOG" id="KOG3178">
    <property type="taxonomic scope" value="Eukaryota"/>
</dbReference>
<dbReference type="OMA" id="IKETGPQ"/>
<dbReference type="UniPathway" id="UPA00287"/>
<dbReference type="PHI-base" id="PHI:3534"/>
<dbReference type="GO" id="GO:0047145">
    <property type="term" value="F:demethylsterigmatocystin 6-O-methyltransferase activity"/>
    <property type="evidence" value="ECO:0007669"/>
    <property type="project" value="UniProtKB-EC"/>
</dbReference>
<dbReference type="GO" id="GO:0046983">
    <property type="term" value="F:protein dimerization activity"/>
    <property type="evidence" value="ECO:0007669"/>
    <property type="project" value="InterPro"/>
</dbReference>
<dbReference type="GO" id="GO:0045122">
    <property type="term" value="P:aflatoxin biosynthetic process"/>
    <property type="evidence" value="ECO:0007669"/>
    <property type="project" value="UniProtKB-UniPathway"/>
</dbReference>
<dbReference type="GO" id="GO:0032259">
    <property type="term" value="P:methylation"/>
    <property type="evidence" value="ECO:0007669"/>
    <property type="project" value="UniProtKB-KW"/>
</dbReference>
<dbReference type="FunFam" id="3.40.50.150:FF:000458">
    <property type="entry name" value="O-methyltransferase B"/>
    <property type="match status" value="1"/>
</dbReference>
<dbReference type="Gene3D" id="3.40.50.150">
    <property type="entry name" value="Vaccinia Virus protein VP39"/>
    <property type="match status" value="1"/>
</dbReference>
<dbReference type="Gene3D" id="1.10.10.10">
    <property type="entry name" value="Winged helix-like DNA-binding domain superfamily/Winged helix DNA-binding domain"/>
    <property type="match status" value="1"/>
</dbReference>
<dbReference type="InterPro" id="IPR016461">
    <property type="entry name" value="COMT-like"/>
</dbReference>
<dbReference type="InterPro" id="IPR001077">
    <property type="entry name" value="O_MeTrfase_dom"/>
</dbReference>
<dbReference type="InterPro" id="IPR012967">
    <property type="entry name" value="Plant_O-MeTrfase_dimerisation"/>
</dbReference>
<dbReference type="InterPro" id="IPR029063">
    <property type="entry name" value="SAM-dependent_MTases_sf"/>
</dbReference>
<dbReference type="InterPro" id="IPR036388">
    <property type="entry name" value="WH-like_DNA-bd_sf"/>
</dbReference>
<dbReference type="InterPro" id="IPR036390">
    <property type="entry name" value="WH_DNA-bd_sf"/>
</dbReference>
<dbReference type="PANTHER" id="PTHR43712:SF1">
    <property type="entry name" value="HYPOTHETICAL O-METHYLTRANSFERASE (EUROFUNG)-RELATED"/>
    <property type="match status" value="1"/>
</dbReference>
<dbReference type="PANTHER" id="PTHR43712">
    <property type="entry name" value="PUTATIVE (AFU_ORTHOLOGUE AFUA_4G14580)-RELATED"/>
    <property type="match status" value="1"/>
</dbReference>
<dbReference type="Pfam" id="PF08100">
    <property type="entry name" value="Dimerisation"/>
    <property type="match status" value="1"/>
</dbReference>
<dbReference type="Pfam" id="PF00891">
    <property type="entry name" value="Methyltransf_2"/>
    <property type="match status" value="1"/>
</dbReference>
<dbReference type="PIRSF" id="PIRSF005739">
    <property type="entry name" value="O-mtase"/>
    <property type="match status" value="1"/>
</dbReference>
<dbReference type="SUPFAM" id="SSF53335">
    <property type="entry name" value="S-adenosyl-L-methionine-dependent methyltransferases"/>
    <property type="match status" value="1"/>
</dbReference>
<dbReference type="SUPFAM" id="SSF46785">
    <property type="entry name" value="Winged helix' DNA-binding domain"/>
    <property type="match status" value="1"/>
</dbReference>
<dbReference type="PROSITE" id="PS51683">
    <property type="entry name" value="SAM_OMT_II"/>
    <property type="match status" value="1"/>
</dbReference>
<comment type="function">
    <text evidence="5">Catalyzes both the conversion of demethylsterigmatocystin (DMST) to sterigmatocystin and the conversion of dihydrodemethylsterigmatocystin to dihydrosterigmatocystin (DHDMST) during aflatoxin biosynthesis.</text>
</comment>
<comment type="catalytic activity">
    <reaction>
        <text>6-demethylsterigmatocystin + S-adenosyl-L-methionine = sterigmatocystin + S-adenosyl-L-homocysteine + H(+)</text>
        <dbReference type="Rhea" id="RHEA:11504"/>
        <dbReference type="ChEBI" id="CHEBI:15378"/>
        <dbReference type="ChEBI" id="CHEBI:18227"/>
        <dbReference type="ChEBI" id="CHEBI:18236"/>
        <dbReference type="ChEBI" id="CHEBI:57856"/>
        <dbReference type="ChEBI" id="CHEBI:59789"/>
        <dbReference type="EC" id="2.1.1.109"/>
    </reaction>
</comment>
<comment type="pathway">
    <text evidence="5">Mycotoxin biosynthesis; aflatoxin biosynthesis.</text>
</comment>
<comment type="similarity">
    <text evidence="4">Belongs to the class I-like SAM-binding methyltransferase superfamily. Cation-independent O-methyltransferase family. COMT subfamily.</text>
</comment>
<feature type="initiator methionine" description="Removed" evidence="3">
    <location>
        <position position="1"/>
    </location>
</feature>
<feature type="chain" id="PRO_0000422198" description="Demethylsterigmatocystin 6-O-methyltransferase">
    <location>
        <begin position="2"/>
        <end position="386"/>
    </location>
</feature>
<feature type="region of interest" description="Substrate binding" evidence="1">
    <location>
        <begin position="177"/>
        <end position="197"/>
    </location>
</feature>
<feature type="active site" description="Proton acceptor" evidence="4">
    <location>
        <position position="293"/>
    </location>
</feature>
<feature type="binding site" evidence="1">
    <location>
        <begin position="137"/>
        <end position="150"/>
    </location>
    <ligand>
        <name>substrate</name>
    </ligand>
</feature>
<feature type="binding site" evidence="2">
    <location>
        <begin position="228"/>
        <end position="229"/>
    </location>
    <ligand>
        <name>S-adenosyl-L-methionine</name>
        <dbReference type="ChEBI" id="CHEBI:59789"/>
    </ligand>
</feature>
<feature type="binding site" evidence="2">
    <location>
        <position position="253"/>
    </location>
    <ligand>
        <name>S-adenosyl-L-methionine</name>
        <dbReference type="ChEBI" id="CHEBI:59789"/>
    </ligand>
</feature>
<feature type="binding site" evidence="2">
    <location>
        <begin position="273"/>
        <end position="274"/>
    </location>
    <ligand>
        <name>S-adenosyl-L-methionine</name>
        <dbReference type="ChEBI" id="CHEBI:59789"/>
    </ligand>
</feature>
<feature type="binding site" evidence="2">
    <location>
        <position position="289"/>
    </location>
    <ligand>
        <name>S-adenosyl-L-methionine</name>
        <dbReference type="ChEBI" id="CHEBI:59789"/>
    </ligand>
</feature>
<organism>
    <name type="scientific">Aspergillus flavus (strain ATCC 200026 / FGSC A1120 / IAM 13836 / NRRL 3357 / JCM 12722 / SRRC 167)</name>
    <dbReference type="NCBI Taxonomy" id="332952"/>
    <lineage>
        <taxon>Eukaryota</taxon>
        <taxon>Fungi</taxon>
        <taxon>Dikarya</taxon>
        <taxon>Ascomycota</taxon>
        <taxon>Pezizomycotina</taxon>
        <taxon>Eurotiomycetes</taxon>
        <taxon>Eurotiomycetidae</taxon>
        <taxon>Eurotiales</taxon>
        <taxon>Aspergillaceae</taxon>
        <taxon>Aspergillus</taxon>
        <taxon>Aspergillus subgen. Circumdati</taxon>
    </lineage>
</organism>